<feature type="chain" id="PRO_0000155986" description="dCTP deaminase">
    <location>
        <begin position="1"/>
        <end position="193"/>
    </location>
</feature>
<feature type="region of interest" description="Disordered" evidence="2">
    <location>
        <begin position="169"/>
        <end position="193"/>
    </location>
</feature>
<feature type="active site" description="Proton donor/acceptor" evidence="1">
    <location>
        <position position="138"/>
    </location>
</feature>
<feature type="binding site" evidence="1">
    <location>
        <begin position="110"/>
        <end position="115"/>
    </location>
    <ligand>
        <name>dCTP</name>
        <dbReference type="ChEBI" id="CHEBI:61481"/>
    </ligand>
</feature>
<feature type="binding site" evidence="1">
    <location>
        <position position="128"/>
    </location>
    <ligand>
        <name>dCTP</name>
        <dbReference type="ChEBI" id="CHEBI:61481"/>
    </ligand>
</feature>
<feature type="binding site" evidence="1">
    <location>
        <begin position="136"/>
        <end position="138"/>
    </location>
    <ligand>
        <name>dCTP</name>
        <dbReference type="ChEBI" id="CHEBI:61481"/>
    </ligand>
</feature>
<feature type="binding site" evidence="1">
    <location>
        <position position="171"/>
    </location>
    <ligand>
        <name>dCTP</name>
        <dbReference type="ChEBI" id="CHEBI:61481"/>
    </ligand>
</feature>
<feature type="binding site" evidence="1">
    <location>
        <position position="178"/>
    </location>
    <ligand>
        <name>dCTP</name>
        <dbReference type="ChEBI" id="CHEBI:61481"/>
    </ligand>
</feature>
<feature type="binding site" evidence="1">
    <location>
        <position position="182"/>
    </location>
    <ligand>
        <name>dCTP</name>
        <dbReference type="ChEBI" id="CHEBI:61481"/>
    </ligand>
</feature>
<name>DCD_ECO57</name>
<keyword id="KW-0378">Hydrolase</keyword>
<keyword id="KW-0546">Nucleotide metabolism</keyword>
<keyword id="KW-0547">Nucleotide-binding</keyword>
<keyword id="KW-1185">Reference proteome</keyword>
<accession>P63902</accession>
<accession>Q8X7L4</accession>
<organism>
    <name type="scientific">Escherichia coli O157:H7</name>
    <dbReference type="NCBI Taxonomy" id="83334"/>
    <lineage>
        <taxon>Bacteria</taxon>
        <taxon>Pseudomonadati</taxon>
        <taxon>Pseudomonadota</taxon>
        <taxon>Gammaproteobacteria</taxon>
        <taxon>Enterobacterales</taxon>
        <taxon>Enterobacteriaceae</taxon>
        <taxon>Escherichia</taxon>
    </lineage>
</organism>
<sequence>MRLCDRDIEAWLDEGRLSINPRPPVERINGATVDVRLGNKFRTFRGHTAAFIDLSGPKDEVSAALDRVMSDEIVLDESEAFYLHPGELALAVTLESVTLPADLVGWLDGRSSLARLGLMVHVTAHRIDPGWSGCIVLEFYNSGKLPLALRPGMLIGALSFEPLSGPAARPYNRREDAKYRNQQGAVASRIDKD</sequence>
<reference key="1">
    <citation type="journal article" date="2001" name="Nature">
        <title>Genome sequence of enterohaemorrhagic Escherichia coli O157:H7.</title>
        <authorList>
            <person name="Perna N.T."/>
            <person name="Plunkett G. III"/>
            <person name="Burland V."/>
            <person name="Mau B."/>
            <person name="Glasner J.D."/>
            <person name="Rose D.J."/>
            <person name="Mayhew G.F."/>
            <person name="Evans P.S."/>
            <person name="Gregor J."/>
            <person name="Kirkpatrick H.A."/>
            <person name="Posfai G."/>
            <person name="Hackett J."/>
            <person name="Klink S."/>
            <person name="Boutin A."/>
            <person name="Shao Y."/>
            <person name="Miller L."/>
            <person name="Grotbeck E.J."/>
            <person name="Davis N.W."/>
            <person name="Lim A."/>
            <person name="Dimalanta E.T."/>
            <person name="Potamousis K."/>
            <person name="Apodaca J."/>
            <person name="Anantharaman T.S."/>
            <person name="Lin J."/>
            <person name="Yen G."/>
            <person name="Schwartz D.C."/>
            <person name="Welch R.A."/>
            <person name="Blattner F.R."/>
        </authorList>
    </citation>
    <scope>NUCLEOTIDE SEQUENCE [LARGE SCALE GENOMIC DNA]</scope>
    <source>
        <strain>O157:H7 / EDL933 / ATCC 700927 / EHEC</strain>
    </source>
</reference>
<reference key="2">
    <citation type="journal article" date="2001" name="DNA Res.">
        <title>Complete genome sequence of enterohemorrhagic Escherichia coli O157:H7 and genomic comparison with a laboratory strain K-12.</title>
        <authorList>
            <person name="Hayashi T."/>
            <person name="Makino K."/>
            <person name="Ohnishi M."/>
            <person name="Kurokawa K."/>
            <person name="Ishii K."/>
            <person name="Yokoyama K."/>
            <person name="Han C.-G."/>
            <person name="Ohtsubo E."/>
            <person name="Nakayama K."/>
            <person name="Murata T."/>
            <person name="Tanaka M."/>
            <person name="Tobe T."/>
            <person name="Iida T."/>
            <person name="Takami H."/>
            <person name="Honda T."/>
            <person name="Sasakawa C."/>
            <person name="Ogasawara N."/>
            <person name="Yasunaga T."/>
            <person name="Kuhara S."/>
            <person name="Shiba T."/>
            <person name="Hattori M."/>
            <person name="Shinagawa H."/>
        </authorList>
    </citation>
    <scope>NUCLEOTIDE SEQUENCE [LARGE SCALE GENOMIC DNA]</scope>
    <source>
        <strain>O157:H7 / Sakai / RIMD 0509952 / EHEC</strain>
    </source>
</reference>
<comment type="function">
    <text evidence="1">Catalyzes the deamination of dCTP to dUTP.</text>
</comment>
<comment type="catalytic activity">
    <reaction evidence="1">
        <text>dCTP + H2O + H(+) = dUTP + NH4(+)</text>
        <dbReference type="Rhea" id="RHEA:22680"/>
        <dbReference type="ChEBI" id="CHEBI:15377"/>
        <dbReference type="ChEBI" id="CHEBI:15378"/>
        <dbReference type="ChEBI" id="CHEBI:28938"/>
        <dbReference type="ChEBI" id="CHEBI:61481"/>
        <dbReference type="ChEBI" id="CHEBI:61555"/>
        <dbReference type="EC" id="3.5.4.13"/>
    </reaction>
</comment>
<comment type="pathway">
    <text evidence="1">Pyrimidine metabolism; dUMP biosynthesis; dUMP from dCTP (dUTP route): step 1/2.</text>
</comment>
<comment type="subunit">
    <text evidence="1">Homotrimer.</text>
</comment>
<comment type="similarity">
    <text evidence="1">Belongs to the dCTP deaminase family.</text>
</comment>
<dbReference type="EC" id="3.5.4.13" evidence="1"/>
<dbReference type="EMBL" id="AE005174">
    <property type="protein sequence ID" value="AAG57127.1"/>
    <property type="molecule type" value="Genomic_DNA"/>
</dbReference>
<dbReference type="EMBL" id="BA000007">
    <property type="protein sequence ID" value="BAB36295.1"/>
    <property type="molecule type" value="Genomic_DNA"/>
</dbReference>
<dbReference type="PIR" id="C85833">
    <property type="entry name" value="C85833"/>
</dbReference>
<dbReference type="PIR" id="H90987">
    <property type="entry name" value="H90987"/>
</dbReference>
<dbReference type="RefSeq" id="NP_310899.1">
    <property type="nucleotide sequence ID" value="NC_002695.1"/>
</dbReference>
<dbReference type="RefSeq" id="WP_001234777.1">
    <property type="nucleotide sequence ID" value="NZ_VOAI01000013.1"/>
</dbReference>
<dbReference type="SMR" id="P63902"/>
<dbReference type="STRING" id="155864.Z3233"/>
<dbReference type="GeneID" id="916917"/>
<dbReference type="KEGG" id="ece:Z3233"/>
<dbReference type="KEGG" id="ecs:ECs_2872"/>
<dbReference type="PATRIC" id="fig|386585.9.peg.3005"/>
<dbReference type="eggNOG" id="COG0717">
    <property type="taxonomic scope" value="Bacteria"/>
</dbReference>
<dbReference type="HOGENOM" id="CLU_087476_2_0_6"/>
<dbReference type="OMA" id="PVESMMW"/>
<dbReference type="UniPathway" id="UPA00610">
    <property type="reaction ID" value="UER00665"/>
</dbReference>
<dbReference type="Proteomes" id="UP000000558">
    <property type="component" value="Chromosome"/>
</dbReference>
<dbReference type="Proteomes" id="UP000002519">
    <property type="component" value="Chromosome"/>
</dbReference>
<dbReference type="GO" id="GO:0008829">
    <property type="term" value="F:dCTP deaminase activity"/>
    <property type="evidence" value="ECO:0007669"/>
    <property type="project" value="UniProtKB-UniRule"/>
</dbReference>
<dbReference type="GO" id="GO:0000166">
    <property type="term" value="F:nucleotide binding"/>
    <property type="evidence" value="ECO:0007669"/>
    <property type="project" value="UniProtKB-KW"/>
</dbReference>
<dbReference type="GO" id="GO:0006226">
    <property type="term" value="P:dUMP biosynthetic process"/>
    <property type="evidence" value="ECO:0007669"/>
    <property type="project" value="UniProtKB-UniPathway"/>
</dbReference>
<dbReference type="GO" id="GO:0006229">
    <property type="term" value="P:dUTP biosynthetic process"/>
    <property type="evidence" value="ECO:0007669"/>
    <property type="project" value="UniProtKB-UniRule"/>
</dbReference>
<dbReference type="GO" id="GO:0015949">
    <property type="term" value="P:nucleobase-containing small molecule interconversion"/>
    <property type="evidence" value="ECO:0007669"/>
    <property type="project" value="TreeGrafter"/>
</dbReference>
<dbReference type="CDD" id="cd07557">
    <property type="entry name" value="trimeric_dUTPase"/>
    <property type="match status" value="1"/>
</dbReference>
<dbReference type="FunFam" id="2.70.40.10:FF:000003">
    <property type="entry name" value="dCTP deaminase"/>
    <property type="match status" value="1"/>
</dbReference>
<dbReference type="Gene3D" id="2.70.40.10">
    <property type="match status" value="1"/>
</dbReference>
<dbReference type="HAMAP" id="MF_00146">
    <property type="entry name" value="dCTP_deaminase"/>
    <property type="match status" value="1"/>
</dbReference>
<dbReference type="InterPro" id="IPR011962">
    <property type="entry name" value="dCTP_deaminase"/>
</dbReference>
<dbReference type="InterPro" id="IPR036157">
    <property type="entry name" value="dUTPase-like_sf"/>
</dbReference>
<dbReference type="InterPro" id="IPR033704">
    <property type="entry name" value="dUTPase_trimeric"/>
</dbReference>
<dbReference type="NCBIfam" id="TIGR02274">
    <property type="entry name" value="dCTP_deam"/>
    <property type="match status" value="1"/>
</dbReference>
<dbReference type="PANTHER" id="PTHR42680">
    <property type="entry name" value="DCTP DEAMINASE"/>
    <property type="match status" value="1"/>
</dbReference>
<dbReference type="PANTHER" id="PTHR42680:SF3">
    <property type="entry name" value="DCTP DEAMINASE"/>
    <property type="match status" value="1"/>
</dbReference>
<dbReference type="Pfam" id="PF22769">
    <property type="entry name" value="DCD"/>
    <property type="match status" value="1"/>
</dbReference>
<dbReference type="SUPFAM" id="SSF51283">
    <property type="entry name" value="dUTPase-like"/>
    <property type="match status" value="1"/>
</dbReference>
<proteinExistence type="inferred from homology"/>
<evidence type="ECO:0000255" key="1">
    <source>
        <dbReference type="HAMAP-Rule" id="MF_00146"/>
    </source>
</evidence>
<evidence type="ECO:0000256" key="2">
    <source>
        <dbReference type="SAM" id="MobiDB-lite"/>
    </source>
</evidence>
<gene>
    <name evidence="1" type="primary">dcd</name>
    <name type="ordered locus">Z3233</name>
    <name type="ordered locus">ECs2872</name>
</gene>
<protein>
    <recommendedName>
        <fullName evidence="1">dCTP deaminase</fullName>
        <ecNumber evidence="1">3.5.4.13</ecNumber>
    </recommendedName>
    <alternativeName>
        <fullName evidence="1">Deoxycytidine triphosphate deaminase</fullName>
    </alternativeName>
</protein>